<evidence type="ECO:0000255" key="1">
    <source>
        <dbReference type="HAMAP-Rule" id="MF_01678"/>
    </source>
</evidence>
<evidence type="ECO:0000305" key="2"/>
<sequence length="362" mass="38703">MNIDGIPTRTLRAHPDRRAIDIIDQTRLPHALHWVRVATLEEAAHAIRAMQVRGAPLIGATAAYGLAIALDFEASDRRLAEAVALLGATRPTAVNLHWALARMENILRPLAPEARCDAAWAEAAAIAEEDVAQNAAIGQHGLKLWNDLIVADGQTLNIMTHCNAGWLATVDWGTALSPVYAAHDAGVPVHVWVSETRPRNQGLLTAWELEQHGVPHTLIADNAAGLLMRNGKVDAVIVGADRIAANGDVANKVGTYLKALACADNGIPFYVAAPRSTLDFACPEGASIPIEERDGDEFRLVHGLDSRGVPSALRQLPAGEDVANPAFDVTPNWLVKAIITERGVCPASRDGLLALYPEEARG</sequence>
<accession>Q47AR7</accession>
<keyword id="KW-0028">Amino-acid biosynthesis</keyword>
<keyword id="KW-0413">Isomerase</keyword>
<keyword id="KW-0486">Methionine biosynthesis</keyword>
<feature type="chain" id="PRO_0000357170" description="Methylthioribose-1-phosphate isomerase">
    <location>
        <begin position="1"/>
        <end position="362"/>
    </location>
</feature>
<feature type="active site" description="Proton donor" evidence="1">
    <location>
        <position position="241"/>
    </location>
</feature>
<feature type="binding site" evidence="1">
    <location>
        <begin position="53"/>
        <end position="55"/>
    </location>
    <ligand>
        <name>substrate</name>
    </ligand>
</feature>
<feature type="binding site" evidence="1">
    <location>
        <position position="90"/>
    </location>
    <ligand>
        <name>substrate</name>
    </ligand>
</feature>
<feature type="binding site" evidence="1">
    <location>
        <position position="201"/>
    </location>
    <ligand>
        <name>substrate</name>
    </ligand>
</feature>
<feature type="binding site" evidence="1">
    <location>
        <begin position="251"/>
        <end position="252"/>
    </location>
    <ligand>
        <name>substrate</name>
    </ligand>
</feature>
<feature type="site" description="Transition state stabilizer" evidence="1">
    <location>
        <position position="162"/>
    </location>
</feature>
<comment type="function">
    <text evidence="1">Catalyzes the interconversion of methylthioribose-1-phosphate (MTR-1-P) into methylthioribulose-1-phosphate (MTRu-1-P).</text>
</comment>
<comment type="catalytic activity">
    <reaction evidence="1">
        <text>5-(methylsulfanyl)-alpha-D-ribose 1-phosphate = 5-(methylsulfanyl)-D-ribulose 1-phosphate</text>
        <dbReference type="Rhea" id="RHEA:19989"/>
        <dbReference type="ChEBI" id="CHEBI:58533"/>
        <dbReference type="ChEBI" id="CHEBI:58548"/>
        <dbReference type="EC" id="5.3.1.23"/>
    </reaction>
</comment>
<comment type="pathway">
    <text evidence="1">Amino-acid biosynthesis; L-methionine biosynthesis via salvage pathway; L-methionine from S-methyl-5-thio-alpha-D-ribose 1-phosphate: step 1/6.</text>
</comment>
<comment type="similarity">
    <text evidence="2">Belongs to the eIF-2B alpha/beta/delta subunits family. MtnA subfamily.</text>
</comment>
<gene>
    <name evidence="1" type="primary">mtnA</name>
    <name type="ordered locus">Daro_3335</name>
</gene>
<reference key="1">
    <citation type="journal article" date="2009" name="BMC Genomics">
        <title>Metabolic analysis of the soil microbe Dechloromonas aromatica str. RCB: indications of a surprisingly complex life-style and cryptic anaerobic pathways for aromatic degradation.</title>
        <authorList>
            <person name="Salinero K.K."/>
            <person name="Keller K."/>
            <person name="Feil W.S."/>
            <person name="Feil H."/>
            <person name="Trong S."/>
            <person name="Di Bartolo G."/>
            <person name="Lapidus A."/>
        </authorList>
    </citation>
    <scope>NUCLEOTIDE SEQUENCE [LARGE SCALE GENOMIC DNA]</scope>
    <source>
        <strain>RCB</strain>
    </source>
</reference>
<organism>
    <name type="scientific">Dechloromonas aromatica (strain RCB)</name>
    <dbReference type="NCBI Taxonomy" id="159087"/>
    <lineage>
        <taxon>Bacteria</taxon>
        <taxon>Pseudomonadati</taxon>
        <taxon>Pseudomonadota</taxon>
        <taxon>Betaproteobacteria</taxon>
        <taxon>Rhodocyclales</taxon>
        <taxon>Azonexaceae</taxon>
        <taxon>Dechloromonas</taxon>
    </lineage>
</organism>
<name>MTNA_DECAR</name>
<protein>
    <recommendedName>
        <fullName evidence="1">Methylthioribose-1-phosphate isomerase</fullName>
        <shortName evidence="1">M1Pi</shortName>
        <shortName evidence="1">MTR-1-P isomerase</shortName>
        <ecNumber evidence="1">5.3.1.23</ecNumber>
    </recommendedName>
    <alternativeName>
        <fullName evidence="1">S-methyl-5-thioribose-1-phosphate isomerase</fullName>
    </alternativeName>
</protein>
<dbReference type="EC" id="5.3.1.23" evidence="1"/>
<dbReference type="EMBL" id="CP000089">
    <property type="protein sequence ID" value="AAZ48064.1"/>
    <property type="molecule type" value="Genomic_DNA"/>
</dbReference>
<dbReference type="SMR" id="Q47AR7"/>
<dbReference type="STRING" id="159087.Daro_3335"/>
<dbReference type="KEGG" id="dar:Daro_3335"/>
<dbReference type="eggNOG" id="COG0182">
    <property type="taxonomic scope" value="Bacteria"/>
</dbReference>
<dbReference type="HOGENOM" id="CLU_016218_1_2_4"/>
<dbReference type="OrthoDB" id="9803436at2"/>
<dbReference type="UniPathway" id="UPA00904">
    <property type="reaction ID" value="UER00874"/>
</dbReference>
<dbReference type="GO" id="GO:0046523">
    <property type="term" value="F:S-methyl-5-thioribose-1-phosphate isomerase activity"/>
    <property type="evidence" value="ECO:0007669"/>
    <property type="project" value="UniProtKB-UniRule"/>
</dbReference>
<dbReference type="GO" id="GO:0019509">
    <property type="term" value="P:L-methionine salvage from methylthioadenosine"/>
    <property type="evidence" value="ECO:0007669"/>
    <property type="project" value="UniProtKB-UniRule"/>
</dbReference>
<dbReference type="FunFam" id="1.20.120.420:FF:000003">
    <property type="entry name" value="Methylthioribose-1-phosphate isomerase"/>
    <property type="match status" value="1"/>
</dbReference>
<dbReference type="FunFam" id="3.40.50.10470:FF:000006">
    <property type="entry name" value="Methylthioribose-1-phosphate isomerase"/>
    <property type="match status" value="1"/>
</dbReference>
<dbReference type="Gene3D" id="1.20.120.420">
    <property type="entry name" value="translation initiation factor eif-2b, domain 1"/>
    <property type="match status" value="1"/>
</dbReference>
<dbReference type="Gene3D" id="3.40.50.10470">
    <property type="entry name" value="Translation initiation factor eif-2b, domain 2"/>
    <property type="match status" value="1"/>
</dbReference>
<dbReference type="HAMAP" id="MF_01678">
    <property type="entry name" value="Salvage_MtnA"/>
    <property type="match status" value="1"/>
</dbReference>
<dbReference type="InterPro" id="IPR000649">
    <property type="entry name" value="IF-2B-related"/>
</dbReference>
<dbReference type="InterPro" id="IPR005251">
    <property type="entry name" value="IF-M1Pi"/>
</dbReference>
<dbReference type="InterPro" id="IPR042529">
    <property type="entry name" value="IF_2B-like_C"/>
</dbReference>
<dbReference type="InterPro" id="IPR011559">
    <property type="entry name" value="Initiation_fac_2B_a/b/d"/>
</dbReference>
<dbReference type="InterPro" id="IPR027363">
    <property type="entry name" value="M1Pi_N"/>
</dbReference>
<dbReference type="InterPro" id="IPR037171">
    <property type="entry name" value="NagB/RpiA_transferase-like"/>
</dbReference>
<dbReference type="NCBIfam" id="TIGR00524">
    <property type="entry name" value="eIF-2B_rel"/>
    <property type="match status" value="1"/>
</dbReference>
<dbReference type="NCBIfam" id="NF004326">
    <property type="entry name" value="PRK05720.1"/>
    <property type="match status" value="1"/>
</dbReference>
<dbReference type="NCBIfam" id="TIGR00512">
    <property type="entry name" value="salvage_mtnA"/>
    <property type="match status" value="1"/>
</dbReference>
<dbReference type="PANTHER" id="PTHR43475">
    <property type="entry name" value="METHYLTHIORIBOSE-1-PHOSPHATE ISOMERASE"/>
    <property type="match status" value="1"/>
</dbReference>
<dbReference type="PANTHER" id="PTHR43475:SF1">
    <property type="entry name" value="METHYLTHIORIBOSE-1-PHOSPHATE ISOMERASE"/>
    <property type="match status" value="1"/>
</dbReference>
<dbReference type="Pfam" id="PF01008">
    <property type="entry name" value="IF-2B"/>
    <property type="match status" value="1"/>
</dbReference>
<dbReference type="SUPFAM" id="SSF100950">
    <property type="entry name" value="NagB/RpiA/CoA transferase-like"/>
    <property type="match status" value="1"/>
</dbReference>
<proteinExistence type="inferred from homology"/>